<organism>
    <name type="scientific">Lachnoclostridium phytofermentans (strain ATCC 700394 / DSM 18823 / ISDg)</name>
    <name type="common">Clostridium phytofermentans</name>
    <dbReference type="NCBI Taxonomy" id="357809"/>
    <lineage>
        <taxon>Bacteria</taxon>
        <taxon>Bacillati</taxon>
        <taxon>Bacillota</taxon>
        <taxon>Clostridia</taxon>
        <taxon>Lachnospirales</taxon>
        <taxon>Lachnospiraceae</taxon>
    </lineage>
</organism>
<proteinExistence type="inferred from homology"/>
<accession>A9KJL3</accession>
<comment type="function">
    <text evidence="1">DNA-dependent RNA polymerase catalyzes the transcription of DNA into RNA using the four ribonucleoside triphosphates as substrates.</text>
</comment>
<comment type="catalytic activity">
    <reaction evidence="1">
        <text>RNA(n) + a ribonucleoside 5'-triphosphate = RNA(n+1) + diphosphate</text>
        <dbReference type="Rhea" id="RHEA:21248"/>
        <dbReference type="Rhea" id="RHEA-COMP:14527"/>
        <dbReference type="Rhea" id="RHEA-COMP:17342"/>
        <dbReference type="ChEBI" id="CHEBI:33019"/>
        <dbReference type="ChEBI" id="CHEBI:61557"/>
        <dbReference type="ChEBI" id="CHEBI:140395"/>
        <dbReference type="EC" id="2.7.7.6"/>
    </reaction>
</comment>
<comment type="cofactor">
    <cofactor evidence="1">
        <name>Mg(2+)</name>
        <dbReference type="ChEBI" id="CHEBI:18420"/>
    </cofactor>
    <text evidence="1">Binds 1 Mg(2+) ion per subunit.</text>
</comment>
<comment type="cofactor">
    <cofactor evidence="1">
        <name>Zn(2+)</name>
        <dbReference type="ChEBI" id="CHEBI:29105"/>
    </cofactor>
    <text evidence="1">Binds 2 Zn(2+) ions per subunit.</text>
</comment>
<comment type="subunit">
    <text evidence="1">The RNAP catalytic core consists of 2 alpha, 1 beta, 1 beta' and 1 omega subunit. When a sigma factor is associated with the core the holoenzyme is formed, which can initiate transcription.</text>
</comment>
<comment type="similarity">
    <text evidence="1">Belongs to the RNA polymerase beta' chain family.</text>
</comment>
<dbReference type="EC" id="2.7.7.6" evidence="1"/>
<dbReference type="EMBL" id="CP000885">
    <property type="protein sequence ID" value="ABX44033.1"/>
    <property type="molecule type" value="Genomic_DNA"/>
</dbReference>
<dbReference type="RefSeq" id="WP_012201681.1">
    <property type="nucleotide sequence ID" value="NC_010001.1"/>
</dbReference>
<dbReference type="SMR" id="A9KJL3"/>
<dbReference type="STRING" id="357809.Cphy_3686"/>
<dbReference type="KEGG" id="cpy:Cphy_3686"/>
<dbReference type="eggNOG" id="COG0086">
    <property type="taxonomic scope" value="Bacteria"/>
</dbReference>
<dbReference type="HOGENOM" id="CLU_000524_3_1_9"/>
<dbReference type="OrthoDB" id="9815296at2"/>
<dbReference type="Proteomes" id="UP000000370">
    <property type="component" value="Chromosome"/>
</dbReference>
<dbReference type="GO" id="GO:0000428">
    <property type="term" value="C:DNA-directed RNA polymerase complex"/>
    <property type="evidence" value="ECO:0007669"/>
    <property type="project" value="UniProtKB-KW"/>
</dbReference>
<dbReference type="GO" id="GO:0003677">
    <property type="term" value="F:DNA binding"/>
    <property type="evidence" value="ECO:0007669"/>
    <property type="project" value="UniProtKB-UniRule"/>
</dbReference>
<dbReference type="GO" id="GO:0003899">
    <property type="term" value="F:DNA-directed RNA polymerase activity"/>
    <property type="evidence" value="ECO:0007669"/>
    <property type="project" value="UniProtKB-UniRule"/>
</dbReference>
<dbReference type="GO" id="GO:0000287">
    <property type="term" value="F:magnesium ion binding"/>
    <property type="evidence" value="ECO:0007669"/>
    <property type="project" value="UniProtKB-UniRule"/>
</dbReference>
<dbReference type="GO" id="GO:0008270">
    <property type="term" value="F:zinc ion binding"/>
    <property type="evidence" value="ECO:0007669"/>
    <property type="project" value="UniProtKB-UniRule"/>
</dbReference>
<dbReference type="GO" id="GO:0006351">
    <property type="term" value="P:DNA-templated transcription"/>
    <property type="evidence" value="ECO:0007669"/>
    <property type="project" value="UniProtKB-UniRule"/>
</dbReference>
<dbReference type="CDD" id="cd02655">
    <property type="entry name" value="RNAP_beta'_C"/>
    <property type="match status" value="1"/>
</dbReference>
<dbReference type="CDD" id="cd01609">
    <property type="entry name" value="RNAP_beta'_N"/>
    <property type="match status" value="1"/>
</dbReference>
<dbReference type="FunFam" id="1.10.150.390:FF:000002">
    <property type="entry name" value="DNA-directed RNA polymerase subunit beta"/>
    <property type="match status" value="1"/>
</dbReference>
<dbReference type="FunFam" id="4.10.860.120:FF:000001">
    <property type="entry name" value="DNA-directed RNA polymerase subunit beta"/>
    <property type="match status" value="1"/>
</dbReference>
<dbReference type="Gene3D" id="1.10.132.30">
    <property type="match status" value="1"/>
</dbReference>
<dbReference type="Gene3D" id="1.10.150.390">
    <property type="match status" value="1"/>
</dbReference>
<dbReference type="Gene3D" id="1.10.1790.20">
    <property type="match status" value="1"/>
</dbReference>
<dbReference type="Gene3D" id="1.10.40.90">
    <property type="match status" value="1"/>
</dbReference>
<dbReference type="Gene3D" id="2.40.40.20">
    <property type="match status" value="1"/>
</dbReference>
<dbReference type="Gene3D" id="2.40.50.100">
    <property type="match status" value="1"/>
</dbReference>
<dbReference type="Gene3D" id="4.10.860.120">
    <property type="entry name" value="RNA polymerase II, clamp domain"/>
    <property type="match status" value="1"/>
</dbReference>
<dbReference type="Gene3D" id="1.10.274.100">
    <property type="entry name" value="RNA polymerase Rpb1, domain 3"/>
    <property type="match status" value="2"/>
</dbReference>
<dbReference type="HAMAP" id="MF_01322">
    <property type="entry name" value="RNApol_bact_RpoC"/>
    <property type="match status" value="1"/>
</dbReference>
<dbReference type="InterPro" id="IPR045867">
    <property type="entry name" value="DNA-dir_RpoC_beta_prime"/>
</dbReference>
<dbReference type="InterPro" id="IPR012754">
    <property type="entry name" value="DNA-dir_RpoC_beta_prime_bact"/>
</dbReference>
<dbReference type="InterPro" id="IPR000722">
    <property type="entry name" value="RNA_pol_asu"/>
</dbReference>
<dbReference type="InterPro" id="IPR006592">
    <property type="entry name" value="RNA_pol_N"/>
</dbReference>
<dbReference type="InterPro" id="IPR007080">
    <property type="entry name" value="RNA_pol_Rpb1_1"/>
</dbReference>
<dbReference type="InterPro" id="IPR007066">
    <property type="entry name" value="RNA_pol_Rpb1_3"/>
</dbReference>
<dbReference type="InterPro" id="IPR042102">
    <property type="entry name" value="RNA_pol_Rpb1_3_sf"/>
</dbReference>
<dbReference type="InterPro" id="IPR007083">
    <property type="entry name" value="RNA_pol_Rpb1_4"/>
</dbReference>
<dbReference type="InterPro" id="IPR007081">
    <property type="entry name" value="RNA_pol_Rpb1_5"/>
</dbReference>
<dbReference type="InterPro" id="IPR044893">
    <property type="entry name" value="RNA_pol_Rpb1_clamp_domain"/>
</dbReference>
<dbReference type="InterPro" id="IPR038120">
    <property type="entry name" value="Rpb1_funnel_sf"/>
</dbReference>
<dbReference type="NCBIfam" id="TIGR02386">
    <property type="entry name" value="rpoC_TIGR"/>
    <property type="match status" value="1"/>
</dbReference>
<dbReference type="PANTHER" id="PTHR19376">
    <property type="entry name" value="DNA-DIRECTED RNA POLYMERASE"/>
    <property type="match status" value="1"/>
</dbReference>
<dbReference type="PANTHER" id="PTHR19376:SF54">
    <property type="entry name" value="DNA-DIRECTED RNA POLYMERASE SUBUNIT BETA"/>
    <property type="match status" value="1"/>
</dbReference>
<dbReference type="Pfam" id="PF04997">
    <property type="entry name" value="RNA_pol_Rpb1_1"/>
    <property type="match status" value="1"/>
</dbReference>
<dbReference type="Pfam" id="PF00623">
    <property type="entry name" value="RNA_pol_Rpb1_2"/>
    <property type="match status" value="2"/>
</dbReference>
<dbReference type="Pfam" id="PF04983">
    <property type="entry name" value="RNA_pol_Rpb1_3"/>
    <property type="match status" value="1"/>
</dbReference>
<dbReference type="Pfam" id="PF05000">
    <property type="entry name" value="RNA_pol_Rpb1_4"/>
    <property type="match status" value="1"/>
</dbReference>
<dbReference type="Pfam" id="PF04998">
    <property type="entry name" value="RNA_pol_Rpb1_5"/>
    <property type="match status" value="1"/>
</dbReference>
<dbReference type="SMART" id="SM00663">
    <property type="entry name" value="RPOLA_N"/>
    <property type="match status" value="1"/>
</dbReference>
<dbReference type="SUPFAM" id="SSF64484">
    <property type="entry name" value="beta and beta-prime subunits of DNA dependent RNA-polymerase"/>
    <property type="match status" value="1"/>
</dbReference>
<keyword id="KW-0240">DNA-directed RNA polymerase</keyword>
<keyword id="KW-0460">Magnesium</keyword>
<keyword id="KW-0479">Metal-binding</keyword>
<keyword id="KW-0548">Nucleotidyltransferase</keyword>
<keyword id="KW-1185">Reference proteome</keyword>
<keyword id="KW-0804">Transcription</keyword>
<keyword id="KW-0808">Transferase</keyword>
<keyword id="KW-0862">Zinc</keyword>
<reference key="1">
    <citation type="submission" date="2007-11" db="EMBL/GenBank/DDBJ databases">
        <title>Complete genome sequence of Clostridium phytofermentans ISDg.</title>
        <authorList>
            <person name="Leschine S.B."/>
            <person name="Warnick T.A."/>
            <person name="Blanchard J.L."/>
            <person name="Schnell D.J."/>
            <person name="Petit E.L."/>
            <person name="LaTouf W.G."/>
            <person name="Copeland A."/>
            <person name="Lucas S."/>
            <person name="Lapidus A."/>
            <person name="Barry K."/>
            <person name="Glavina del Rio T."/>
            <person name="Dalin E."/>
            <person name="Tice H."/>
            <person name="Pitluck S."/>
            <person name="Kiss H."/>
            <person name="Brettin T."/>
            <person name="Bruce D."/>
            <person name="Detter J.C."/>
            <person name="Han C."/>
            <person name="Kuske C."/>
            <person name="Schmutz J."/>
            <person name="Larimer F."/>
            <person name="Land M."/>
            <person name="Hauser L."/>
            <person name="Kyrpides N."/>
            <person name="Kim E.A."/>
            <person name="Richardson P."/>
        </authorList>
    </citation>
    <scope>NUCLEOTIDE SEQUENCE [LARGE SCALE GENOMIC DNA]</scope>
    <source>
        <strain>ATCC 700394 / DSM 18823 / ISDg</strain>
    </source>
</reference>
<feature type="chain" id="PRO_0000353339" description="DNA-directed RNA polymerase subunit beta'">
    <location>
        <begin position="1"/>
        <end position="1255"/>
    </location>
</feature>
<feature type="region of interest" description="Disordered" evidence="2">
    <location>
        <begin position="1220"/>
        <end position="1255"/>
    </location>
</feature>
<feature type="compositionally biased region" description="Acidic residues" evidence="2">
    <location>
        <begin position="1220"/>
        <end position="1240"/>
    </location>
</feature>
<feature type="compositionally biased region" description="Basic and acidic residues" evidence="2">
    <location>
        <begin position="1246"/>
        <end position="1255"/>
    </location>
</feature>
<feature type="binding site" evidence="1">
    <location>
        <position position="68"/>
    </location>
    <ligand>
        <name>Zn(2+)</name>
        <dbReference type="ChEBI" id="CHEBI:29105"/>
        <label>1</label>
    </ligand>
</feature>
<feature type="binding site" evidence="1">
    <location>
        <position position="70"/>
    </location>
    <ligand>
        <name>Zn(2+)</name>
        <dbReference type="ChEBI" id="CHEBI:29105"/>
        <label>1</label>
    </ligand>
</feature>
<feature type="binding site" evidence="1">
    <location>
        <position position="83"/>
    </location>
    <ligand>
        <name>Zn(2+)</name>
        <dbReference type="ChEBI" id="CHEBI:29105"/>
        <label>1</label>
    </ligand>
</feature>
<feature type="binding site" evidence="1">
    <location>
        <position position="86"/>
    </location>
    <ligand>
        <name>Zn(2+)</name>
        <dbReference type="ChEBI" id="CHEBI:29105"/>
        <label>1</label>
    </ligand>
</feature>
<feature type="binding site" evidence="1">
    <location>
        <position position="457"/>
    </location>
    <ligand>
        <name>Mg(2+)</name>
        <dbReference type="ChEBI" id="CHEBI:18420"/>
    </ligand>
</feature>
<feature type="binding site" evidence="1">
    <location>
        <position position="459"/>
    </location>
    <ligand>
        <name>Mg(2+)</name>
        <dbReference type="ChEBI" id="CHEBI:18420"/>
    </ligand>
</feature>
<feature type="binding site" evidence="1">
    <location>
        <position position="461"/>
    </location>
    <ligand>
        <name>Mg(2+)</name>
        <dbReference type="ChEBI" id="CHEBI:18420"/>
    </ligand>
</feature>
<feature type="binding site" evidence="1">
    <location>
        <position position="803"/>
    </location>
    <ligand>
        <name>Zn(2+)</name>
        <dbReference type="ChEBI" id="CHEBI:29105"/>
        <label>2</label>
    </ligand>
</feature>
<feature type="binding site" evidence="1">
    <location>
        <position position="885"/>
    </location>
    <ligand>
        <name>Zn(2+)</name>
        <dbReference type="ChEBI" id="CHEBI:29105"/>
        <label>2</label>
    </ligand>
</feature>
<feature type="binding site" evidence="1">
    <location>
        <position position="892"/>
    </location>
    <ligand>
        <name>Zn(2+)</name>
        <dbReference type="ChEBI" id="CHEBI:29105"/>
        <label>2</label>
    </ligand>
</feature>
<feature type="binding site" evidence="1">
    <location>
        <position position="895"/>
    </location>
    <ligand>
        <name>Zn(2+)</name>
        <dbReference type="ChEBI" id="CHEBI:29105"/>
        <label>2</label>
    </ligand>
</feature>
<evidence type="ECO:0000255" key="1">
    <source>
        <dbReference type="HAMAP-Rule" id="MF_01322"/>
    </source>
</evidence>
<evidence type="ECO:0000256" key="2">
    <source>
        <dbReference type="SAM" id="MobiDB-lite"/>
    </source>
</evidence>
<name>RPOC_LACP7</name>
<gene>
    <name evidence="1" type="primary">rpoC</name>
    <name type="ordered locus">Cphy_3686</name>
</gene>
<protein>
    <recommendedName>
        <fullName evidence="1">DNA-directed RNA polymerase subunit beta'</fullName>
        <shortName evidence="1">RNAP subunit beta'</shortName>
        <ecNumber evidence="1">2.7.7.6</ecNumber>
    </recommendedName>
    <alternativeName>
        <fullName evidence="1">RNA polymerase subunit beta'</fullName>
    </alternativeName>
    <alternativeName>
        <fullName evidence="1">Transcriptase subunit beta'</fullName>
    </alternativeName>
</protein>
<sequence>MPTEMINESVKDITYDAIKIGLASPEKIREWSRGEVRKPETINYRTLKPEKDGLFCEKIFGPNKDWECHCGKYKKIRYKGVVCDRCGVEVTKASVRRERMGHIELAAPVSHIWYFKGIPSRMGLILDLSPRTLEKVLYFASYIVLDKGTTDLQYKQVLNEKEFREAYDKYGDRFRVGMGAEAIMELLEAIDLEKESKDLKRGLKESTGQKRARIIKRLEVVEAFRESGNKPEWMIMTVVPVIPPDLRPMVQLDGGRFATSDMNDLYRRIINRNNRLKRLLELGAPDIIVRNEKRMLQEAVDALIDNGRRGRPVTGPGNRPLKSLSDMLKGKQGRFRQNLLGKRVDYSGRSVIVVGPELKIYQCGLPKEMAIELFKPFVMKELVAKGTAHNIKSAKKMVERLQPEVWDILEEVIREHPVMLNRAPTLHRLGIQAFEPVLVEGKAIKLHPLVCTAFNADFDGDQMAVHLPLSVEAQAECRFLLLSPNNLLKPSDGGPVAVPSQDMVLGIYYLTLQKPGDIGEGKYFKSVNEAILAYENGVISLHAMIKVRRTGLNAEGVEESRTIESTVGRFIFNEIISQDLGFVDRSKPENFLALEIDFHTGKKQLKKILEKCINTRGATQTAETLDAIKSLGYKYSTRAAMTVSISDMTVPEAKKDIIERAEKQVEDIAKNHRRGLMTEEERYKAVIETWKEADDEITKELLSGLDKYNNIFMMADSGARGSDKQIKQLAGMRGLMADTSGKTIELPIKANFREGLDVLEYFISAHGARKGLSDTALRTADSGYLTRRLVDVSQDLIIREVDCGEGTDEIPGMEIKAFMDGKEVIEGLEDRIIGRYACETIYDDNGELIVKKNHIITPKRAARIVASKAFEDPNATIKIRTVLSCKSHIGVCAKCYGANMATGEAVQVGEAVGIIAAQSIGEPGTQLTMRTFHTGGVAGDDITQGLPRVEELFEARKPKGLAIIAEFGGTVTIKDTKKKREVIVTRTSNDTLESKAYLIPYGSRIKVMDEQVIEAGDELTEGSVNPHDILKIKGVRAVQDYMIQEVQRVYRLQGVEINDKHIEVIVRQMLKKVRVENNGDAEFLPGTMVDILEYNDVNESLAAKGLEQAEGKQVMLGITKASLATNSFLSAASFQETTKVLTEAAIKGKIDPLIGLKENVIIGKLIPAGTGMKHYRNVKLDTDQNQEITFSEDEFDNGNYEGNFSGNDFKQNFYENEDFNSDEEVSFTEDEYFEDEENDLSTENFDDLKFSEEEE</sequence>